<keyword id="KW-0007">Acetylation</keyword>
<keyword id="KW-0167">Capsid protein</keyword>
<keyword id="KW-0687">Ribonucleoprotein</keyword>
<keyword id="KW-0694">RNA-binding</keyword>
<keyword id="KW-1142">T=3 icosahedral capsid protein</keyword>
<keyword id="KW-0543">Viral nucleoprotein</keyword>
<keyword id="KW-0946">Virion</keyword>
<name>CAPSD_CMVKI</name>
<protein>
    <recommendedName>
        <fullName>Capsid protein</fullName>
        <shortName>CP</shortName>
    </recommendedName>
    <alternativeName>
        <fullName>Coat protein</fullName>
    </alternativeName>
</protein>
<organismHost>
    <name type="scientific">Cucumis sativus</name>
    <name type="common">Cucumber</name>
    <dbReference type="NCBI Taxonomy" id="3659"/>
</organismHost>
<organismHost>
    <name type="scientific">Solanum lycopersicum</name>
    <name type="common">Tomato</name>
    <name type="synonym">Lycopersicon esculentum</name>
    <dbReference type="NCBI Taxonomy" id="4081"/>
</organismHost>
<organismHost>
    <name type="scientific">Spinacia oleracea</name>
    <name type="common">Spinach</name>
    <dbReference type="NCBI Taxonomy" id="3562"/>
</organismHost>
<gene>
    <name type="ORF">ORF3b</name>
</gene>
<proteinExistence type="evidence at protein level"/>
<evidence type="ECO:0000250" key="1"/>
<evidence type="ECO:0000256" key="2">
    <source>
        <dbReference type="SAM" id="MobiDB-lite"/>
    </source>
</evidence>
<evidence type="ECO:0000269" key="3">
    <source>
    </source>
</evidence>
<evidence type="ECO:0000269" key="4">
    <source>
    </source>
</evidence>
<evidence type="ECO:0000305" key="5"/>
<dbReference type="EMBL" id="Z12818">
    <property type="protein sequence ID" value="CAA78279.1"/>
    <property type="molecule type" value="Genomic_RNA"/>
</dbReference>
<dbReference type="PIR" id="B46111">
    <property type="entry name" value="B46111"/>
</dbReference>
<dbReference type="SMR" id="Q06934"/>
<dbReference type="iPTMnet" id="Q06934"/>
<dbReference type="GO" id="GO:1990904">
    <property type="term" value="C:ribonucleoprotein complex"/>
    <property type="evidence" value="ECO:0007669"/>
    <property type="project" value="UniProtKB-KW"/>
</dbReference>
<dbReference type="GO" id="GO:0039617">
    <property type="term" value="C:T=3 icosahedral viral capsid"/>
    <property type="evidence" value="ECO:0007669"/>
    <property type="project" value="UniProtKB-KW"/>
</dbReference>
<dbReference type="GO" id="GO:0019013">
    <property type="term" value="C:viral nucleocapsid"/>
    <property type="evidence" value="ECO:0007669"/>
    <property type="project" value="UniProtKB-KW"/>
</dbReference>
<dbReference type="GO" id="GO:0003723">
    <property type="term" value="F:RNA binding"/>
    <property type="evidence" value="ECO:0007669"/>
    <property type="project" value="UniProtKB-KW"/>
</dbReference>
<dbReference type="GO" id="GO:0005198">
    <property type="term" value="F:structural molecule activity"/>
    <property type="evidence" value="ECO:0007669"/>
    <property type="project" value="InterPro"/>
</dbReference>
<dbReference type="Gene3D" id="2.60.120.530">
    <property type="entry name" value="Cucumovirus coat protein, subunit A"/>
    <property type="match status" value="1"/>
</dbReference>
<dbReference type="InterPro" id="IPR000247">
    <property type="entry name" value="Cucumovirus_coat"/>
</dbReference>
<dbReference type="InterPro" id="IPR037137">
    <property type="entry name" value="Cucumovirus_coat_Asu_sf"/>
</dbReference>
<dbReference type="Pfam" id="PF00760">
    <property type="entry name" value="Cucumo_coat"/>
    <property type="match status" value="1"/>
</dbReference>
<dbReference type="PRINTS" id="PR00222">
    <property type="entry name" value="CUCUMOCOAT"/>
</dbReference>
<dbReference type="SUPFAM" id="SSF88633">
    <property type="entry name" value="Positive stranded ssRNA viruses"/>
    <property type="match status" value="1"/>
</dbReference>
<organism>
    <name type="scientific">Cucumber mosaic virus (strain Kin)</name>
    <name type="common">CMV</name>
    <dbReference type="NCBI Taxonomy" id="36400"/>
    <lineage>
        <taxon>Viruses</taxon>
        <taxon>Riboviria</taxon>
        <taxon>Orthornavirae</taxon>
        <taxon>Kitrinoviricota</taxon>
        <taxon>Alsuviricetes</taxon>
        <taxon>Martellivirales</taxon>
        <taxon>Bromoviridae</taxon>
        <taxon>Cucumovirus</taxon>
        <taxon>Cucumber mosaic virus</taxon>
    </lineage>
</organism>
<reference key="1">
    <citation type="journal article" date="1993" name="Virology">
        <title>Mutational analysis of cis-acting sequences and gene function in RNA3 of cucumber mosaic virus.</title>
        <authorList>
            <person name="Boccard F."/>
            <person name="Baulcombe D."/>
        </authorList>
    </citation>
    <scope>NUCLEOTIDE SEQUENCE [GENOMIC RNA]</scope>
</reference>
<reference key="2">
    <citation type="journal article" date="1982" name="J. Biochem.">
        <title>Micro-identification of amino-terminal acetylamino acids in proteins.</title>
        <authorList>
            <person name="Tsunasawa S."/>
            <person name="Narita K."/>
        </authorList>
    </citation>
    <scope>ACETYLATION AT MET-1</scope>
</reference>
<reference key="3">
    <citation type="journal article" date="1998" name="Virology">
        <title>Deletions in the conserved amino-terminal basic arm of cucumber mosaic virus coat protein disrupt virion assembly but do not abolish infectivity and cell-to-cell movement.</title>
        <authorList>
            <person name="Schmitz I."/>
            <person name="Rao A.L."/>
        </authorList>
    </citation>
    <scope>FUNCTION</scope>
    <scope>DOMAIN ARG-RICH MOTIF</scope>
</reference>
<comment type="function">
    <text evidence="1 4">Capsid protein. Probably binds RNA and plays a role in packaging (By similarity).</text>
</comment>
<comment type="subcellular location">
    <subcellularLocation>
        <location evidence="5">Virion</location>
    </subcellularLocation>
</comment>
<comment type="domain">
    <text evidence="4">The N-terminal arginine-rich stretch does not seem to be the major RNA-binding region that allows formation of an infectious ribonucleoprotein complex.</text>
</comment>
<comment type="similarity">
    <text evidence="5">Belongs to the cucumovirus capsid protein family.</text>
</comment>
<feature type="chain" id="PRO_0000083209" description="Capsid protein">
    <location>
        <begin position="1"/>
        <end position="218"/>
    </location>
</feature>
<feature type="region of interest" description="Disordered" evidence="2">
    <location>
        <begin position="1"/>
        <end position="30"/>
    </location>
</feature>
<feature type="compositionally biased region" description="Basic residues" evidence="2">
    <location>
        <begin position="12"/>
        <end position="22"/>
    </location>
</feature>
<feature type="modified residue" description="N-acetylmethionine; by host" evidence="3">
    <location>
        <position position="1"/>
    </location>
</feature>
<sequence>MDKSGSPNASRTSRRRRPRRGSRSASGADAGLRALTQQMLKLNKTLAIGRPTLNHPTFVGSESCKPGYTFTSITLKPPEIEKGSYFGRRLSLPDSVTDYDKKLVSRIQIRINPLPKFDSTVWVTVRKVPSSSDLSVAAISAMFGDGNSPVLVYQYAASGVQANNKLLYDLSEMRADIGDMRKYAVLVYSKDDNLEKDEIVLHVDVEHQRIPISRMLPT</sequence>
<accession>Q06934</accession>